<sequence>MTMNTPRPRSQPPPPHPPLFKPTTPPPPPLLSTSTSTSPPHDFSFAHYLSSPPPSVQRRGRADMSRTPPLGRVGSDLSHNNYSSKANQHRQTGSSSSSKEKDREYKAKSKASSPFFSGLGGSWRSGLSRDEEVKRKAKAKTRGLDVGQWVKKYMASMVEHLLASFSRHGGGEREKREQQRRRPHSFSAHGPSALREQRERWRRRRGQLSSAPASLRASPVNSGHLSVGGSVKVSTSSEESTMEELQSAIEAAIAHCKNSITVAK</sequence>
<keyword id="KW-1070">Brassinosteroid signaling pathway</keyword>
<keyword id="KW-0443">Lipid metabolism</keyword>
<keyword id="KW-0597">Phosphoprotein</keyword>
<keyword id="KW-1185">Reference proteome</keyword>
<comment type="function">
    <text evidence="1">Negative regulator of brassinosteroid signaling.</text>
</comment>
<comment type="subunit">
    <text evidence="5">Interacts with BRI1.</text>
</comment>
<comment type="PTM">
    <text evidence="3">Phosphorylated by BRI1.</text>
</comment>
<comment type="sequence caution" evidence="4">
    <conflict type="erroneous gene model prediction">
        <sequence resource="EMBL-CDS" id="BAF25295"/>
    </conflict>
</comment>
<gene>
    <name type="primary">BKI1</name>
    <name type="synonym">BIP119</name>
    <name type="ordered locus">Os09g0459500</name>
    <name type="ordered locus">LOC_Os09g28550</name>
    <name type="ORF">B1045B05.34</name>
    <name type="ORF">OsJ_29642</name>
    <name type="ORF">OSJNBa0054F02.12</name>
</gene>
<feature type="chain" id="PRO_0000410482" description="Probable BRI1 kinase inhibitor 1">
    <location>
        <begin position="1"/>
        <end position="264"/>
    </location>
</feature>
<feature type="region of interest" description="Disordered" evidence="2">
    <location>
        <begin position="1"/>
        <end position="146"/>
    </location>
</feature>
<feature type="region of interest" description="Disordered" evidence="2">
    <location>
        <begin position="165"/>
        <end position="240"/>
    </location>
</feature>
<feature type="compositionally biased region" description="Pro residues" evidence="2">
    <location>
        <begin position="9"/>
        <end position="30"/>
    </location>
</feature>
<feature type="compositionally biased region" description="Low complexity" evidence="2">
    <location>
        <begin position="31"/>
        <end position="40"/>
    </location>
</feature>
<feature type="compositionally biased region" description="Polar residues" evidence="2">
    <location>
        <begin position="77"/>
        <end position="97"/>
    </location>
</feature>
<feature type="compositionally biased region" description="Basic and acidic residues" evidence="2">
    <location>
        <begin position="98"/>
        <end position="107"/>
    </location>
</feature>
<feature type="compositionally biased region" description="Low complexity" evidence="2">
    <location>
        <begin position="208"/>
        <end position="219"/>
    </location>
</feature>
<feature type="compositionally biased region" description="Low complexity" evidence="2">
    <location>
        <begin position="227"/>
        <end position="239"/>
    </location>
</feature>
<organism>
    <name type="scientific">Oryza sativa subsp. japonica</name>
    <name type="common">Rice</name>
    <dbReference type="NCBI Taxonomy" id="39947"/>
    <lineage>
        <taxon>Eukaryota</taxon>
        <taxon>Viridiplantae</taxon>
        <taxon>Streptophyta</taxon>
        <taxon>Embryophyta</taxon>
        <taxon>Tracheophyta</taxon>
        <taxon>Spermatophyta</taxon>
        <taxon>Magnoliopsida</taxon>
        <taxon>Liliopsida</taxon>
        <taxon>Poales</taxon>
        <taxon>Poaceae</taxon>
        <taxon>BOP clade</taxon>
        <taxon>Oryzoideae</taxon>
        <taxon>Oryzeae</taxon>
        <taxon>Oryzinae</taxon>
        <taxon>Oryza</taxon>
        <taxon>Oryza sativa</taxon>
    </lineage>
</organism>
<protein>
    <recommendedName>
        <fullName>Probable BRI1 kinase inhibitor 1</fullName>
    </recommendedName>
    <alternativeName>
        <fullName>BRI1-KD interacting protein 119</fullName>
    </alternativeName>
</protein>
<dbReference type="EMBL" id="AP005891">
    <property type="protein sequence ID" value="BAD38386.1"/>
    <property type="molecule type" value="Genomic_DNA"/>
</dbReference>
<dbReference type="EMBL" id="AP006849">
    <property type="protein sequence ID" value="BAD38522.1"/>
    <property type="molecule type" value="Genomic_DNA"/>
</dbReference>
<dbReference type="EMBL" id="AP008215">
    <property type="protein sequence ID" value="BAF25295.1"/>
    <property type="status" value="ALT_SEQ"/>
    <property type="molecule type" value="Genomic_DNA"/>
</dbReference>
<dbReference type="EMBL" id="AP014965">
    <property type="status" value="NOT_ANNOTATED_CDS"/>
    <property type="molecule type" value="Genomic_DNA"/>
</dbReference>
<dbReference type="EMBL" id="CM000146">
    <property type="protein sequence ID" value="EAZ45001.1"/>
    <property type="molecule type" value="Genomic_DNA"/>
</dbReference>
<dbReference type="EMBL" id="AK241292">
    <property type="status" value="NOT_ANNOTATED_CDS"/>
    <property type="molecule type" value="mRNA"/>
</dbReference>
<dbReference type="EMBL" id="AB118006">
    <property type="protein sequence ID" value="BAD11347.1"/>
    <property type="molecule type" value="mRNA"/>
</dbReference>
<dbReference type="RefSeq" id="XP_015610974.1">
    <property type="nucleotide sequence ID" value="XM_015755488.1"/>
</dbReference>
<dbReference type="STRING" id="39947.Q67J19"/>
<dbReference type="PaxDb" id="39947-Q67J19"/>
<dbReference type="KEGG" id="dosa:Os09g0459500"/>
<dbReference type="eggNOG" id="ENOG502QT0J">
    <property type="taxonomic scope" value="Eukaryota"/>
</dbReference>
<dbReference type="HOGENOM" id="CLU_2565254_0_0_1"/>
<dbReference type="InParanoid" id="Q67J19"/>
<dbReference type="OrthoDB" id="1709800at2759"/>
<dbReference type="PlantReactome" id="R-OSA-5632095">
    <property type="pathway name" value="Brassinosteroid signaling"/>
</dbReference>
<dbReference type="Proteomes" id="UP000000763">
    <property type="component" value="Chromosome 9"/>
</dbReference>
<dbReference type="Proteomes" id="UP000007752">
    <property type="component" value="Chromosome 9"/>
</dbReference>
<dbReference type="Proteomes" id="UP000059680">
    <property type="component" value="Chromosome 9"/>
</dbReference>
<dbReference type="GO" id="GO:0005886">
    <property type="term" value="C:plasma membrane"/>
    <property type="evidence" value="ECO:0007669"/>
    <property type="project" value="InterPro"/>
</dbReference>
<dbReference type="GO" id="GO:0019210">
    <property type="term" value="F:kinase inhibitor activity"/>
    <property type="evidence" value="ECO:0007669"/>
    <property type="project" value="InterPro"/>
</dbReference>
<dbReference type="GO" id="GO:0009742">
    <property type="term" value="P:brassinosteroid mediated signaling pathway"/>
    <property type="evidence" value="ECO:0007669"/>
    <property type="project" value="UniProtKB-KW"/>
</dbReference>
<dbReference type="GO" id="GO:0006629">
    <property type="term" value="P:lipid metabolic process"/>
    <property type="evidence" value="ECO:0007669"/>
    <property type="project" value="UniProtKB-KW"/>
</dbReference>
<dbReference type="InterPro" id="IPR039620">
    <property type="entry name" value="BKI1/MAKR1/3/4"/>
</dbReference>
<dbReference type="PANTHER" id="PTHR33312:SF19">
    <property type="entry name" value="BRI1 KINASE INHIBITOR 1"/>
    <property type="match status" value="1"/>
</dbReference>
<dbReference type="PANTHER" id="PTHR33312">
    <property type="entry name" value="MEMBRANE-ASSOCIATED KINASE REGULATOR 4-RELATED"/>
    <property type="match status" value="1"/>
</dbReference>
<name>BKI1_ORYSJ</name>
<accession>Q67J19</accession>
<accession>Q0J170</accession>
<accession>Q761Z5</accession>
<reference key="1">
    <citation type="journal article" date="2005" name="Nature">
        <title>The map-based sequence of the rice genome.</title>
        <authorList>
            <consortium name="International rice genome sequencing project (IRGSP)"/>
        </authorList>
    </citation>
    <scope>NUCLEOTIDE SEQUENCE [LARGE SCALE GENOMIC DNA]</scope>
    <source>
        <strain>cv. Nipponbare</strain>
    </source>
</reference>
<reference key="2">
    <citation type="journal article" date="2008" name="Nucleic Acids Res.">
        <title>The rice annotation project database (RAP-DB): 2008 update.</title>
        <authorList>
            <consortium name="The rice annotation project (RAP)"/>
        </authorList>
    </citation>
    <scope>GENOME REANNOTATION</scope>
    <source>
        <strain>cv. Nipponbare</strain>
    </source>
</reference>
<reference key="3">
    <citation type="journal article" date="2013" name="Rice">
        <title>Improvement of the Oryza sativa Nipponbare reference genome using next generation sequence and optical map data.</title>
        <authorList>
            <person name="Kawahara Y."/>
            <person name="de la Bastide M."/>
            <person name="Hamilton J.P."/>
            <person name="Kanamori H."/>
            <person name="McCombie W.R."/>
            <person name="Ouyang S."/>
            <person name="Schwartz D.C."/>
            <person name="Tanaka T."/>
            <person name="Wu J."/>
            <person name="Zhou S."/>
            <person name="Childs K.L."/>
            <person name="Davidson R.M."/>
            <person name="Lin H."/>
            <person name="Quesada-Ocampo L."/>
            <person name="Vaillancourt B."/>
            <person name="Sakai H."/>
            <person name="Lee S.S."/>
            <person name="Kim J."/>
            <person name="Numa H."/>
            <person name="Itoh T."/>
            <person name="Buell C.R."/>
            <person name="Matsumoto T."/>
        </authorList>
    </citation>
    <scope>GENOME REANNOTATION</scope>
    <source>
        <strain>cv. Nipponbare</strain>
    </source>
</reference>
<reference key="4">
    <citation type="journal article" date="2005" name="PLoS Biol.">
        <title>The genomes of Oryza sativa: a history of duplications.</title>
        <authorList>
            <person name="Yu J."/>
            <person name="Wang J."/>
            <person name="Lin W."/>
            <person name="Li S."/>
            <person name="Li H."/>
            <person name="Zhou J."/>
            <person name="Ni P."/>
            <person name="Dong W."/>
            <person name="Hu S."/>
            <person name="Zeng C."/>
            <person name="Zhang J."/>
            <person name="Zhang Y."/>
            <person name="Li R."/>
            <person name="Xu Z."/>
            <person name="Li S."/>
            <person name="Li X."/>
            <person name="Zheng H."/>
            <person name="Cong L."/>
            <person name="Lin L."/>
            <person name="Yin J."/>
            <person name="Geng J."/>
            <person name="Li G."/>
            <person name="Shi J."/>
            <person name="Liu J."/>
            <person name="Lv H."/>
            <person name="Li J."/>
            <person name="Wang J."/>
            <person name="Deng Y."/>
            <person name="Ran L."/>
            <person name="Shi X."/>
            <person name="Wang X."/>
            <person name="Wu Q."/>
            <person name="Li C."/>
            <person name="Ren X."/>
            <person name="Wang J."/>
            <person name="Wang X."/>
            <person name="Li D."/>
            <person name="Liu D."/>
            <person name="Zhang X."/>
            <person name="Ji Z."/>
            <person name="Zhao W."/>
            <person name="Sun Y."/>
            <person name="Zhang Z."/>
            <person name="Bao J."/>
            <person name="Han Y."/>
            <person name="Dong L."/>
            <person name="Ji J."/>
            <person name="Chen P."/>
            <person name="Wu S."/>
            <person name="Liu J."/>
            <person name="Xiao Y."/>
            <person name="Bu D."/>
            <person name="Tan J."/>
            <person name="Yang L."/>
            <person name="Ye C."/>
            <person name="Zhang J."/>
            <person name="Xu J."/>
            <person name="Zhou Y."/>
            <person name="Yu Y."/>
            <person name="Zhang B."/>
            <person name="Zhuang S."/>
            <person name="Wei H."/>
            <person name="Liu B."/>
            <person name="Lei M."/>
            <person name="Yu H."/>
            <person name="Li Y."/>
            <person name="Xu H."/>
            <person name="Wei S."/>
            <person name="He X."/>
            <person name="Fang L."/>
            <person name="Zhang Z."/>
            <person name="Zhang Y."/>
            <person name="Huang X."/>
            <person name="Su Z."/>
            <person name="Tong W."/>
            <person name="Li J."/>
            <person name="Tong Z."/>
            <person name="Li S."/>
            <person name="Ye J."/>
            <person name="Wang L."/>
            <person name="Fang L."/>
            <person name="Lei T."/>
            <person name="Chen C.-S."/>
            <person name="Chen H.-C."/>
            <person name="Xu Z."/>
            <person name="Li H."/>
            <person name="Huang H."/>
            <person name="Zhang F."/>
            <person name="Xu H."/>
            <person name="Li N."/>
            <person name="Zhao C."/>
            <person name="Li S."/>
            <person name="Dong L."/>
            <person name="Huang Y."/>
            <person name="Li L."/>
            <person name="Xi Y."/>
            <person name="Qi Q."/>
            <person name="Li W."/>
            <person name="Zhang B."/>
            <person name="Hu W."/>
            <person name="Zhang Y."/>
            <person name="Tian X."/>
            <person name="Jiao Y."/>
            <person name="Liang X."/>
            <person name="Jin J."/>
            <person name="Gao L."/>
            <person name="Zheng W."/>
            <person name="Hao B."/>
            <person name="Liu S.-M."/>
            <person name="Wang W."/>
            <person name="Yuan L."/>
            <person name="Cao M."/>
            <person name="McDermott J."/>
            <person name="Samudrala R."/>
            <person name="Wang J."/>
            <person name="Wong G.K.-S."/>
            <person name="Yang H."/>
        </authorList>
    </citation>
    <scope>NUCLEOTIDE SEQUENCE [LARGE SCALE GENOMIC DNA]</scope>
    <source>
        <strain>cv. Nipponbare</strain>
    </source>
</reference>
<reference key="5">
    <citation type="submission" date="2006-10" db="EMBL/GenBank/DDBJ databases">
        <title>Oryza sativa full length cDNA.</title>
        <authorList>
            <consortium name="The rice full-length cDNA consortium"/>
        </authorList>
    </citation>
    <scope>NUCLEOTIDE SEQUENCE [LARGE SCALE MRNA] OF 2-264</scope>
    <source>
        <strain>cv. Nipponbare</strain>
    </source>
</reference>
<reference key="6">
    <citation type="journal article" date="2004" name="Plant Biotechnol.">
        <title>Two proton pump interactors identified from a direct phosphorylation screening of a rice cDNA library by using a recombinant BRI1 receptor kinase.</title>
        <authorList>
            <person name="Hirabayashi S."/>
            <person name="Matsushita Y."/>
            <person name="Sato M."/>
            <person name="Oh-i R."/>
            <person name="Kasahara M."/>
            <person name="Abe H."/>
            <person name="Nyunoya H."/>
        </authorList>
    </citation>
    <scope>NUCLEOTIDE SEQUENCE [MRNA] OF 183-264</scope>
    <scope>INTERACTION WITH BRI1</scope>
    <scope>PHOSPHORYLATION</scope>
</reference>
<proteinExistence type="evidence at protein level"/>
<evidence type="ECO:0000250" key="1"/>
<evidence type="ECO:0000256" key="2">
    <source>
        <dbReference type="SAM" id="MobiDB-lite"/>
    </source>
</evidence>
<evidence type="ECO:0000269" key="3">
    <source ref="6"/>
</evidence>
<evidence type="ECO:0000305" key="4"/>
<evidence type="ECO:0000305" key="5">
    <source ref="6"/>
</evidence>